<organism>
    <name type="scientific">Shigella boydii serotype 18 (strain CDC 3083-94 / BS512)</name>
    <dbReference type="NCBI Taxonomy" id="344609"/>
    <lineage>
        <taxon>Bacteria</taxon>
        <taxon>Pseudomonadati</taxon>
        <taxon>Pseudomonadota</taxon>
        <taxon>Gammaproteobacteria</taxon>
        <taxon>Enterobacterales</taxon>
        <taxon>Enterobacteriaceae</taxon>
        <taxon>Shigella</taxon>
    </lineage>
</organism>
<protein>
    <recommendedName>
        <fullName evidence="1">Chaperone protein DnaJ</fullName>
    </recommendedName>
</protein>
<name>DNAJ_SHIB3</name>
<comment type="function">
    <text evidence="1">Participates actively in the response to hyperosmotic and heat shock by preventing the aggregation of stress-denatured proteins and by disaggregating proteins, also in an autonomous, DnaK-independent fashion. Unfolded proteins bind initially to DnaJ; upon interaction with the DnaJ-bound protein, DnaK hydrolyzes its bound ATP, resulting in the formation of a stable complex. GrpE releases ADP from DnaK; ATP binding to DnaK triggers the release of the substrate protein, thus completing the reaction cycle. Several rounds of ATP-dependent interactions between DnaJ, DnaK and GrpE are required for fully efficient folding. Also involved, together with DnaK and GrpE, in the DNA replication of plasmids through activation of initiation proteins.</text>
</comment>
<comment type="cofactor">
    <cofactor evidence="1">
        <name>Zn(2+)</name>
        <dbReference type="ChEBI" id="CHEBI:29105"/>
    </cofactor>
    <text evidence="1">Binds 2 Zn(2+) ions per monomer.</text>
</comment>
<comment type="subunit">
    <text evidence="1">Homodimer.</text>
</comment>
<comment type="subcellular location">
    <subcellularLocation>
        <location evidence="1">Cytoplasm</location>
    </subcellularLocation>
</comment>
<comment type="domain">
    <text evidence="1">The J domain is necessary and sufficient to stimulate DnaK ATPase activity. Zinc center 1 plays an important role in the autonomous, DnaK-independent chaperone activity of DnaJ. Zinc center 2 is essential for interaction with DnaK and for DnaJ activity.</text>
</comment>
<comment type="similarity">
    <text evidence="1">Belongs to the DnaJ family.</text>
</comment>
<evidence type="ECO:0000255" key="1">
    <source>
        <dbReference type="HAMAP-Rule" id="MF_01152"/>
    </source>
</evidence>
<reference key="1">
    <citation type="submission" date="2008-05" db="EMBL/GenBank/DDBJ databases">
        <title>Complete sequence of Shigella boydii serotype 18 strain BS512.</title>
        <authorList>
            <person name="Rasko D.A."/>
            <person name="Rosovitz M."/>
            <person name="Maurelli A.T."/>
            <person name="Myers G."/>
            <person name="Seshadri R."/>
            <person name="Cer R."/>
            <person name="Jiang L."/>
            <person name="Ravel J."/>
            <person name="Sebastian Y."/>
        </authorList>
    </citation>
    <scope>NUCLEOTIDE SEQUENCE [LARGE SCALE GENOMIC DNA]</scope>
    <source>
        <strain>CDC 3083-94 / BS512</strain>
    </source>
</reference>
<dbReference type="EMBL" id="CP001063">
    <property type="protein sequence ID" value="ACD06900.1"/>
    <property type="molecule type" value="Genomic_DNA"/>
</dbReference>
<dbReference type="RefSeq" id="WP_001118467.1">
    <property type="nucleotide sequence ID" value="NC_010658.1"/>
</dbReference>
<dbReference type="SMR" id="B2U233"/>
<dbReference type="STRING" id="344609.SbBS512_E0018"/>
<dbReference type="KEGG" id="sbc:SbBS512_E0018"/>
<dbReference type="HOGENOM" id="CLU_017633_0_7_6"/>
<dbReference type="Proteomes" id="UP000001030">
    <property type="component" value="Chromosome"/>
</dbReference>
<dbReference type="GO" id="GO:0005737">
    <property type="term" value="C:cytoplasm"/>
    <property type="evidence" value="ECO:0007669"/>
    <property type="project" value="UniProtKB-SubCell"/>
</dbReference>
<dbReference type="GO" id="GO:0005524">
    <property type="term" value="F:ATP binding"/>
    <property type="evidence" value="ECO:0007669"/>
    <property type="project" value="InterPro"/>
</dbReference>
<dbReference type="GO" id="GO:0031072">
    <property type="term" value="F:heat shock protein binding"/>
    <property type="evidence" value="ECO:0007669"/>
    <property type="project" value="InterPro"/>
</dbReference>
<dbReference type="GO" id="GO:0051082">
    <property type="term" value="F:unfolded protein binding"/>
    <property type="evidence" value="ECO:0007669"/>
    <property type="project" value="UniProtKB-UniRule"/>
</dbReference>
<dbReference type="GO" id="GO:0008270">
    <property type="term" value="F:zinc ion binding"/>
    <property type="evidence" value="ECO:0007669"/>
    <property type="project" value="UniProtKB-UniRule"/>
</dbReference>
<dbReference type="GO" id="GO:0051085">
    <property type="term" value="P:chaperone cofactor-dependent protein refolding"/>
    <property type="evidence" value="ECO:0007669"/>
    <property type="project" value="TreeGrafter"/>
</dbReference>
<dbReference type="GO" id="GO:0006260">
    <property type="term" value="P:DNA replication"/>
    <property type="evidence" value="ECO:0007669"/>
    <property type="project" value="UniProtKB-KW"/>
</dbReference>
<dbReference type="GO" id="GO:0042026">
    <property type="term" value="P:protein refolding"/>
    <property type="evidence" value="ECO:0007669"/>
    <property type="project" value="TreeGrafter"/>
</dbReference>
<dbReference type="GO" id="GO:0009408">
    <property type="term" value="P:response to heat"/>
    <property type="evidence" value="ECO:0007669"/>
    <property type="project" value="InterPro"/>
</dbReference>
<dbReference type="CDD" id="cd06257">
    <property type="entry name" value="DnaJ"/>
    <property type="match status" value="1"/>
</dbReference>
<dbReference type="CDD" id="cd10747">
    <property type="entry name" value="DnaJ_C"/>
    <property type="match status" value="1"/>
</dbReference>
<dbReference type="CDD" id="cd10719">
    <property type="entry name" value="DnaJ_zf"/>
    <property type="match status" value="1"/>
</dbReference>
<dbReference type="FunFam" id="1.10.287.110:FF:000003">
    <property type="entry name" value="Molecular chaperone DnaJ"/>
    <property type="match status" value="1"/>
</dbReference>
<dbReference type="FunFam" id="2.10.230.10:FF:000002">
    <property type="entry name" value="Molecular chaperone DnaJ"/>
    <property type="match status" value="1"/>
</dbReference>
<dbReference type="FunFam" id="2.60.260.20:FF:000004">
    <property type="entry name" value="Molecular chaperone DnaJ"/>
    <property type="match status" value="1"/>
</dbReference>
<dbReference type="Gene3D" id="1.10.287.110">
    <property type="entry name" value="DnaJ domain"/>
    <property type="match status" value="1"/>
</dbReference>
<dbReference type="Gene3D" id="2.10.230.10">
    <property type="entry name" value="Heat shock protein DnaJ, cysteine-rich domain"/>
    <property type="match status" value="1"/>
</dbReference>
<dbReference type="Gene3D" id="2.60.260.20">
    <property type="entry name" value="Urease metallochaperone UreE, N-terminal domain"/>
    <property type="match status" value="2"/>
</dbReference>
<dbReference type="HAMAP" id="MF_01152">
    <property type="entry name" value="DnaJ"/>
    <property type="match status" value="1"/>
</dbReference>
<dbReference type="InterPro" id="IPR012724">
    <property type="entry name" value="DnaJ"/>
</dbReference>
<dbReference type="InterPro" id="IPR002939">
    <property type="entry name" value="DnaJ_C"/>
</dbReference>
<dbReference type="InterPro" id="IPR001623">
    <property type="entry name" value="DnaJ_domain"/>
</dbReference>
<dbReference type="InterPro" id="IPR018253">
    <property type="entry name" value="DnaJ_domain_CS"/>
</dbReference>
<dbReference type="InterPro" id="IPR008971">
    <property type="entry name" value="HSP40/DnaJ_pept-bd"/>
</dbReference>
<dbReference type="InterPro" id="IPR001305">
    <property type="entry name" value="HSP_DnaJ_Cys-rich_dom"/>
</dbReference>
<dbReference type="InterPro" id="IPR036410">
    <property type="entry name" value="HSP_DnaJ_Cys-rich_dom_sf"/>
</dbReference>
<dbReference type="InterPro" id="IPR036869">
    <property type="entry name" value="J_dom_sf"/>
</dbReference>
<dbReference type="NCBIfam" id="TIGR02349">
    <property type="entry name" value="DnaJ_bact"/>
    <property type="match status" value="1"/>
</dbReference>
<dbReference type="NCBIfam" id="NF008035">
    <property type="entry name" value="PRK10767.1"/>
    <property type="match status" value="1"/>
</dbReference>
<dbReference type="PANTHER" id="PTHR43096:SF48">
    <property type="entry name" value="CHAPERONE PROTEIN DNAJ"/>
    <property type="match status" value="1"/>
</dbReference>
<dbReference type="PANTHER" id="PTHR43096">
    <property type="entry name" value="DNAJ HOMOLOG 1, MITOCHONDRIAL-RELATED"/>
    <property type="match status" value="1"/>
</dbReference>
<dbReference type="Pfam" id="PF00226">
    <property type="entry name" value="DnaJ"/>
    <property type="match status" value="1"/>
</dbReference>
<dbReference type="Pfam" id="PF01556">
    <property type="entry name" value="DnaJ_C"/>
    <property type="match status" value="1"/>
</dbReference>
<dbReference type="Pfam" id="PF00684">
    <property type="entry name" value="DnaJ_CXXCXGXG"/>
    <property type="match status" value="1"/>
</dbReference>
<dbReference type="PRINTS" id="PR00625">
    <property type="entry name" value="JDOMAIN"/>
</dbReference>
<dbReference type="SMART" id="SM00271">
    <property type="entry name" value="DnaJ"/>
    <property type="match status" value="1"/>
</dbReference>
<dbReference type="SUPFAM" id="SSF46565">
    <property type="entry name" value="Chaperone J-domain"/>
    <property type="match status" value="1"/>
</dbReference>
<dbReference type="SUPFAM" id="SSF57938">
    <property type="entry name" value="DnaJ/Hsp40 cysteine-rich domain"/>
    <property type="match status" value="1"/>
</dbReference>
<dbReference type="SUPFAM" id="SSF49493">
    <property type="entry name" value="HSP40/DnaJ peptide-binding domain"/>
    <property type="match status" value="2"/>
</dbReference>
<dbReference type="PROSITE" id="PS00636">
    <property type="entry name" value="DNAJ_1"/>
    <property type="match status" value="1"/>
</dbReference>
<dbReference type="PROSITE" id="PS50076">
    <property type="entry name" value="DNAJ_2"/>
    <property type="match status" value="1"/>
</dbReference>
<dbReference type="PROSITE" id="PS51188">
    <property type="entry name" value="ZF_CR"/>
    <property type="match status" value="1"/>
</dbReference>
<keyword id="KW-0143">Chaperone</keyword>
<keyword id="KW-0963">Cytoplasm</keyword>
<keyword id="KW-0235">DNA replication</keyword>
<keyword id="KW-0479">Metal-binding</keyword>
<keyword id="KW-1185">Reference proteome</keyword>
<keyword id="KW-0677">Repeat</keyword>
<keyword id="KW-0346">Stress response</keyword>
<keyword id="KW-0862">Zinc</keyword>
<keyword id="KW-0863">Zinc-finger</keyword>
<proteinExistence type="inferred from homology"/>
<feature type="chain" id="PRO_1000137729" description="Chaperone protein DnaJ">
    <location>
        <begin position="1"/>
        <end position="376"/>
    </location>
</feature>
<feature type="domain" description="J" evidence="1">
    <location>
        <begin position="5"/>
        <end position="70"/>
    </location>
</feature>
<feature type="repeat" description="CXXCXGXG motif">
    <location>
        <begin position="144"/>
        <end position="151"/>
    </location>
</feature>
<feature type="repeat" description="CXXCXGXG motif">
    <location>
        <begin position="161"/>
        <end position="168"/>
    </location>
</feature>
<feature type="repeat" description="CXXCXGXG motif">
    <location>
        <begin position="183"/>
        <end position="190"/>
    </location>
</feature>
<feature type="repeat" description="CXXCXGXG motif">
    <location>
        <begin position="197"/>
        <end position="204"/>
    </location>
</feature>
<feature type="zinc finger region" description="CR-type" evidence="1">
    <location>
        <begin position="131"/>
        <end position="209"/>
    </location>
</feature>
<feature type="binding site" evidence="1">
    <location>
        <position position="144"/>
    </location>
    <ligand>
        <name>Zn(2+)</name>
        <dbReference type="ChEBI" id="CHEBI:29105"/>
        <label>1</label>
    </ligand>
</feature>
<feature type="binding site" evidence="1">
    <location>
        <position position="147"/>
    </location>
    <ligand>
        <name>Zn(2+)</name>
        <dbReference type="ChEBI" id="CHEBI:29105"/>
        <label>1</label>
    </ligand>
</feature>
<feature type="binding site" evidence="1">
    <location>
        <position position="161"/>
    </location>
    <ligand>
        <name>Zn(2+)</name>
        <dbReference type="ChEBI" id="CHEBI:29105"/>
        <label>2</label>
    </ligand>
</feature>
<feature type="binding site" evidence="1">
    <location>
        <position position="164"/>
    </location>
    <ligand>
        <name>Zn(2+)</name>
        <dbReference type="ChEBI" id="CHEBI:29105"/>
        <label>2</label>
    </ligand>
</feature>
<feature type="binding site" evidence="1">
    <location>
        <position position="183"/>
    </location>
    <ligand>
        <name>Zn(2+)</name>
        <dbReference type="ChEBI" id="CHEBI:29105"/>
        <label>2</label>
    </ligand>
</feature>
<feature type="binding site" evidence="1">
    <location>
        <position position="186"/>
    </location>
    <ligand>
        <name>Zn(2+)</name>
        <dbReference type="ChEBI" id="CHEBI:29105"/>
        <label>2</label>
    </ligand>
</feature>
<feature type="binding site" evidence="1">
    <location>
        <position position="197"/>
    </location>
    <ligand>
        <name>Zn(2+)</name>
        <dbReference type="ChEBI" id="CHEBI:29105"/>
        <label>1</label>
    </ligand>
</feature>
<feature type="binding site" evidence="1">
    <location>
        <position position="200"/>
    </location>
    <ligand>
        <name>Zn(2+)</name>
        <dbReference type="ChEBI" id="CHEBI:29105"/>
        <label>1</label>
    </ligand>
</feature>
<accession>B2U233</accession>
<sequence length="376" mass="41043">MAKQDYYEILGVSKTAEEREIKKAYKRLAMKYHPDRNQGDKEAEAKFKEIKEAYEVLTDSQKRAAYDQYGHAAFEQGGMGGGGFGGGADFSDIFGDVFGDIFGGGRGRQRAARGADLRYNMELTLEEAVRGVTKEIRIPTLEECDVCHGSGAKPGTQPQTCPTCHGSGQVQMRQGFFAVQQTCPHCQGRGTLIKDPCNKCHGHGRVERSKTLSVKIPAGVDTGDRIRLAGEGEAGQHGAPAGDLYVQVQVKQHPIFEREGNNLYCEVPINFAMAALGGEIEVPTLDGRVKLKVPGETQTGKLFRMRGKGVKSVRGGAQGDLLCRVVVETPVGLNEKQKQLLQELQESFGGPTGEHNSPRSKSFFDGVKKFFDDLTR</sequence>
<gene>
    <name evidence="1" type="primary">dnaJ</name>
    <name type="ordered locus">SbBS512_E0018</name>
</gene>